<organism>
    <name type="scientific">Tomato bushy stunt virus (strain BS-3)</name>
    <name type="common">TBSV</name>
    <dbReference type="NCBI Taxonomy" id="12146"/>
    <lineage>
        <taxon>Viruses</taxon>
        <taxon>Riboviria</taxon>
        <taxon>Orthornavirae</taxon>
        <taxon>Kitrinoviricota</taxon>
        <taxon>Tolucaviricetes</taxon>
        <taxon>Tolivirales</taxon>
        <taxon>Tombusviridae</taxon>
        <taxon>Procedovirinae</taxon>
        <taxon>Tombusvirus</taxon>
        <taxon>Tombusvirus lycopersici</taxon>
    </lineage>
</organism>
<gene>
    <name type="ORF">ORF3</name>
</gene>
<accession>P50631</accession>
<feature type="chain" id="PRO_0000222890" description="Movement protein">
    <location>
        <begin position="1"/>
        <end position="189"/>
    </location>
</feature>
<comment type="function">
    <text evidence="1">Transports viral genome to neighboring plant cells directly through plasmosdesmata, without any budding. The movement protein allows efficient cell to cell propagation, by bypassing the host cell wall barrier (By similarity).</text>
</comment>
<comment type="subunit">
    <text evidence="1">Interacts with host protein HFI22.</text>
</comment>
<comment type="subcellular location">
    <subcellularLocation>
        <location evidence="1">Host membrane</location>
    </subcellularLocation>
</comment>
<comment type="PTM">
    <text evidence="1">Phosphorylated.</text>
</comment>
<comment type="similarity">
    <text evidence="2">Belongs to the tombusvirus/aureusvirus movement protein p22 family.</text>
</comment>
<sequence>MDTEYEQVNKPWNELYKETMLGNKLMVNVGMEDQEVPLLPSNFLTKVRVGLSGGYITMRRFRIKIIPLVSRKAGVSGKLYLRDISDTKGQKLHCTESLDLGREIRLTMQHLDFSVSTRSGVPIVFGFEELVSPFLEGRELFSISVKWQFGLSKNCYSLPQSKWKVMYLEDALKVLKLSKKKASKTDSSV</sequence>
<evidence type="ECO:0000250" key="1"/>
<evidence type="ECO:0000305" key="2"/>
<reference key="1">
    <citation type="journal article" date="1996" name="Phytopathology">
        <title>Different tomato bushy stunt virus strains cause disease outbreaks on solanaceous crops in Spain.</title>
        <authorList>
            <person name="Luis-Areteaga M."/>
            <person name="Rodriguez-Cerezo E."/>
            <person name="Fraile A."/>
            <person name="Saez E."/>
            <person name="Garcia-Arenal F."/>
        </authorList>
        <dbReference type="AGRICOLA" id="IND20581771"/>
    </citation>
    <scope>NUCLEOTIDE SEQUENCE [GENOMIC RNA]</scope>
</reference>
<dbReference type="EMBL" id="Z68902">
    <property type="protein sequence ID" value="CAA93137.1"/>
    <property type="molecule type" value="Genomic_RNA"/>
</dbReference>
<dbReference type="EMBL" id="Z68895">
    <property type="protein sequence ID" value="CAA93123.1"/>
    <property type="molecule type" value="Genomic_RNA"/>
</dbReference>
<dbReference type="EMBL" id="Z68900">
    <property type="protein sequence ID" value="CAA93133.1"/>
    <property type="molecule type" value="Genomic_RNA"/>
</dbReference>
<dbReference type="GO" id="GO:0033644">
    <property type="term" value="C:host cell membrane"/>
    <property type="evidence" value="ECO:0007669"/>
    <property type="project" value="UniProtKB-SubCell"/>
</dbReference>
<dbReference type="GO" id="GO:0016020">
    <property type="term" value="C:membrane"/>
    <property type="evidence" value="ECO:0007669"/>
    <property type="project" value="UniProtKB-KW"/>
</dbReference>
<dbReference type="GO" id="GO:0019028">
    <property type="term" value="C:viral capsid"/>
    <property type="evidence" value="ECO:0007669"/>
    <property type="project" value="InterPro"/>
</dbReference>
<dbReference type="GO" id="GO:0003723">
    <property type="term" value="F:RNA binding"/>
    <property type="evidence" value="ECO:0007669"/>
    <property type="project" value="UniProtKB-KW"/>
</dbReference>
<dbReference type="GO" id="GO:0046740">
    <property type="term" value="P:transport of virus in host, cell to cell"/>
    <property type="evidence" value="ECO:0007669"/>
    <property type="project" value="UniProtKB-KW"/>
</dbReference>
<dbReference type="InterPro" id="IPR005332">
    <property type="entry name" value="TBSV_p22"/>
</dbReference>
<dbReference type="Pfam" id="PF03558">
    <property type="entry name" value="TBSV_P22"/>
    <property type="match status" value="1"/>
</dbReference>
<protein>
    <recommendedName>
        <fullName>Movement protein</fullName>
    </recommendedName>
    <alternativeName>
        <fullName>p22</fullName>
    </alternativeName>
</protein>
<proteinExistence type="inferred from homology"/>
<organismHost>
    <name type="scientific">Capsicum annuum</name>
    <name type="common">Capsicum pepper</name>
    <dbReference type="NCBI Taxonomy" id="4072"/>
</organismHost>
<organismHost>
    <name type="scientific">Malus</name>
    <dbReference type="NCBI Taxonomy" id="3749"/>
</organismHost>
<organismHost>
    <name type="scientific">Pyrus</name>
    <name type="common">pears</name>
    <dbReference type="NCBI Taxonomy" id="3766"/>
</organismHost>
<organismHost>
    <name type="scientific">Solanum lycopersicum</name>
    <name type="common">Tomato</name>
    <name type="synonym">Lycopersicon esculentum</name>
    <dbReference type="NCBI Taxonomy" id="4081"/>
</organismHost>
<organismHost>
    <name type="scientific">Solanum melongena</name>
    <name type="common">eggplant</name>
    <dbReference type="NCBI Taxonomy" id="4111"/>
</organismHost>
<organismHost>
    <name type="scientific">Tolmiea menziesii</name>
    <dbReference type="NCBI Taxonomy" id="29777"/>
</organismHost>
<organismHost>
    <name type="scientific">Tulipa</name>
    <dbReference type="NCBI Taxonomy" id="13305"/>
</organismHost>
<keyword id="KW-1043">Host membrane</keyword>
<keyword id="KW-0945">Host-virus interaction</keyword>
<keyword id="KW-0472">Membrane</keyword>
<keyword id="KW-0597">Phosphoprotein</keyword>
<keyword id="KW-0694">RNA-binding</keyword>
<keyword id="KW-0813">Transport</keyword>
<keyword id="KW-0916">Viral movement protein</keyword>
<name>MVP_TBSVB</name>